<comment type="function">
    <text evidence="2">Secreted effector that completely suppresses the host cell death induced by cell death-inducing proteins.</text>
</comment>
<comment type="subcellular location">
    <subcellularLocation>
        <location evidence="2">Secreted</location>
    </subcellularLocation>
    <subcellularLocation>
        <location evidence="2">Host membrane</location>
    </subcellularLocation>
</comment>
<comment type="domain">
    <text evidence="5">The RxLR-dEER motif acts to carry the protein into the host cell cytoplasm through binding to cell surface phosphatidylinositol-3-phosphate.</text>
</comment>
<comment type="similarity">
    <text evidence="4">Belongs to the RxLR effector family.</text>
</comment>
<evidence type="ECO:0000255" key="1"/>
<evidence type="ECO:0000269" key="2">
    <source>
    </source>
</evidence>
<evidence type="ECO:0000303" key="3">
    <source>
    </source>
</evidence>
<evidence type="ECO:0000305" key="4"/>
<evidence type="ECO:0000305" key="5">
    <source>
    </source>
</evidence>
<accession>P0CV13</accession>
<proteinExistence type="evidence at transcript level"/>
<organism>
    <name type="scientific">Plasmopara viticola</name>
    <name type="common">Downy mildew of grapevine</name>
    <name type="synonym">Botrytis viticola</name>
    <dbReference type="NCBI Taxonomy" id="143451"/>
    <lineage>
        <taxon>Eukaryota</taxon>
        <taxon>Sar</taxon>
        <taxon>Stramenopiles</taxon>
        <taxon>Oomycota</taxon>
        <taxon>Peronosporales</taxon>
        <taxon>Peronosporaceae</taxon>
        <taxon>Plasmopara</taxon>
    </lineage>
</organism>
<name>RLR47_PLAVT</name>
<reference key="1">
    <citation type="journal article" date="2018" name="Front. Plant Sci.">
        <title>In planta functional analysis and subcellular localization of the oomycete pathogen Plasmopara viticola candidate RXLR effector repertoire.</title>
        <authorList>
            <person name="Liu Y."/>
            <person name="Lan X."/>
            <person name="Song S."/>
            <person name="Yin L."/>
            <person name="Dry I.B."/>
            <person name="Qu J."/>
            <person name="Xiang J."/>
            <person name="Lu J."/>
        </authorList>
    </citation>
    <scope>NUCLEOTIDE SEQUENCE [MRNA]</scope>
    <scope>DOMAIN</scope>
    <scope>FUNCTION</scope>
    <scope>SUBCELLULAR LOCATION</scope>
</reference>
<keyword id="KW-1043">Host membrane</keyword>
<keyword id="KW-0472">Membrane</keyword>
<keyword id="KW-0964">Secreted</keyword>
<keyword id="KW-0732">Signal</keyword>
<keyword id="KW-0843">Virulence</keyword>
<gene>
    <name evidence="3" type="primary">RXLR47</name>
</gene>
<feature type="signal peptide" evidence="1">
    <location>
        <begin position="1"/>
        <end position="22"/>
    </location>
</feature>
<feature type="chain" id="PRO_0000447922" description="Secreted RxLR effector protein 47">
    <location>
        <begin position="23"/>
        <end position="149"/>
    </location>
</feature>
<feature type="short sequence motif" description="RxLR-dEER" evidence="5">
    <location>
        <begin position="57"/>
        <end position="79"/>
    </location>
</feature>
<protein>
    <recommendedName>
        <fullName evidence="3">Secreted RxLR effector protein 47</fullName>
    </recommendedName>
</protein>
<sequence>MICLLPLIAVMLFVFATHTVLALEIATGIDAPETEFSASTQTTRVSFRRITSVDNKRFLRQETTFEEKPSVNDVHAEERSSFYRKFLYRLFGDRMDVEAKVLARDSNWLINIFRRKFLRWAGREEHPHKATTFDTTCCQVAPYDPVTSS</sequence>
<dbReference type="GO" id="GO:0005576">
    <property type="term" value="C:extracellular region"/>
    <property type="evidence" value="ECO:0007669"/>
    <property type="project" value="UniProtKB-SubCell"/>
</dbReference>
<dbReference type="GO" id="GO:0033644">
    <property type="term" value="C:host cell membrane"/>
    <property type="evidence" value="ECO:0007669"/>
    <property type="project" value="UniProtKB-SubCell"/>
</dbReference>
<dbReference type="GO" id="GO:0016020">
    <property type="term" value="C:membrane"/>
    <property type="evidence" value="ECO:0007669"/>
    <property type="project" value="UniProtKB-KW"/>
</dbReference>